<sequence>MPIITDFKAIATGLFVTWKHIFRRSVTVEYPEVKRTPAPRYRARIVLTRDPEGGERCVACYLCSAACPVDCISMEATEDGNGRRYARWFRINFSRCIFCGLCAEACPTLAIQMTPDYEICERDIMELVYEKEDLLIDGCGKDPAYNFYRHAGIGVTQPRGAGEREEEPVDARGLMP</sequence>
<organism>
    <name type="scientific">Geobacter metallireducens (strain ATCC 53774 / DSM 7210 / GS-15)</name>
    <dbReference type="NCBI Taxonomy" id="269799"/>
    <lineage>
        <taxon>Bacteria</taxon>
        <taxon>Pseudomonadati</taxon>
        <taxon>Thermodesulfobacteriota</taxon>
        <taxon>Desulfuromonadia</taxon>
        <taxon>Geobacterales</taxon>
        <taxon>Geobacteraceae</taxon>
        <taxon>Geobacter</taxon>
    </lineage>
</organism>
<reference key="1">
    <citation type="journal article" date="2009" name="BMC Microbiol.">
        <title>The genome sequence of Geobacter metallireducens: features of metabolism, physiology and regulation common and dissimilar to Geobacter sulfurreducens.</title>
        <authorList>
            <person name="Aklujkar M."/>
            <person name="Krushkal J."/>
            <person name="DiBartolo G."/>
            <person name="Lapidus A."/>
            <person name="Land M.L."/>
            <person name="Lovley D.R."/>
        </authorList>
    </citation>
    <scope>NUCLEOTIDE SEQUENCE [LARGE SCALE GENOMIC DNA]</scope>
    <source>
        <strain>ATCC 53774 / DSM 7210 / GS-15</strain>
    </source>
</reference>
<dbReference type="EC" id="7.1.1.-" evidence="1"/>
<dbReference type="EMBL" id="CP000148">
    <property type="protein sequence ID" value="ABB30410.2"/>
    <property type="molecule type" value="Genomic_DNA"/>
</dbReference>
<dbReference type="SMR" id="Q39ZB4"/>
<dbReference type="STRING" id="269799.Gmet_0163"/>
<dbReference type="KEGG" id="gme:Gmet_0163"/>
<dbReference type="eggNOG" id="COG1143">
    <property type="taxonomic scope" value="Bacteria"/>
</dbReference>
<dbReference type="HOGENOM" id="CLU_067218_4_3_7"/>
<dbReference type="Proteomes" id="UP000007073">
    <property type="component" value="Chromosome"/>
</dbReference>
<dbReference type="GO" id="GO:0005886">
    <property type="term" value="C:plasma membrane"/>
    <property type="evidence" value="ECO:0007669"/>
    <property type="project" value="UniProtKB-SubCell"/>
</dbReference>
<dbReference type="GO" id="GO:0051539">
    <property type="term" value="F:4 iron, 4 sulfur cluster binding"/>
    <property type="evidence" value="ECO:0007669"/>
    <property type="project" value="UniProtKB-KW"/>
</dbReference>
<dbReference type="GO" id="GO:0005506">
    <property type="term" value="F:iron ion binding"/>
    <property type="evidence" value="ECO:0007669"/>
    <property type="project" value="UniProtKB-UniRule"/>
</dbReference>
<dbReference type="GO" id="GO:0050136">
    <property type="term" value="F:NADH:ubiquinone reductase (non-electrogenic) activity"/>
    <property type="evidence" value="ECO:0007669"/>
    <property type="project" value="UniProtKB-UniRule"/>
</dbReference>
<dbReference type="GO" id="GO:0048038">
    <property type="term" value="F:quinone binding"/>
    <property type="evidence" value="ECO:0007669"/>
    <property type="project" value="UniProtKB-KW"/>
</dbReference>
<dbReference type="GO" id="GO:0009060">
    <property type="term" value="P:aerobic respiration"/>
    <property type="evidence" value="ECO:0007669"/>
    <property type="project" value="TreeGrafter"/>
</dbReference>
<dbReference type="FunFam" id="3.30.70.3270:FF:000002">
    <property type="entry name" value="NADH-quinone oxidoreductase subunit I"/>
    <property type="match status" value="1"/>
</dbReference>
<dbReference type="Gene3D" id="3.30.70.3270">
    <property type="match status" value="1"/>
</dbReference>
<dbReference type="HAMAP" id="MF_01351">
    <property type="entry name" value="NDH1_NuoI"/>
    <property type="match status" value="1"/>
</dbReference>
<dbReference type="InterPro" id="IPR017896">
    <property type="entry name" value="4Fe4S_Fe-S-bd"/>
</dbReference>
<dbReference type="InterPro" id="IPR017900">
    <property type="entry name" value="4Fe4S_Fe_S_CS"/>
</dbReference>
<dbReference type="InterPro" id="IPR010226">
    <property type="entry name" value="NADH_quinone_OxRdtase_chainI"/>
</dbReference>
<dbReference type="NCBIfam" id="TIGR01971">
    <property type="entry name" value="NuoI"/>
    <property type="match status" value="1"/>
</dbReference>
<dbReference type="NCBIfam" id="NF004536">
    <property type="entry name" value="PRK05888.1-1"/>
    <property type="match status" value="1"/>
</dbReference>
<dbReference type="PANTHER" id="PTHR10849:SF20">
    <property type="entry name" value="NADH DEHYDROGENASE [UBIQUINONE] IRON-SULFUR PROTEIN 8, MITOCHONDRIAL"/>
    <property type="match status" value="1"/>
</dbReference>
<dbReference type="PANTHER" id="PTHR10849">
    <property type="entry name" value="NADH DEHYDROGENASE UBIQUINONE IRON-SULFUR PROTEIN 8, MITOCHONDRIAL"/>
    <property type="match status" value="1"/>
</dbReference>
<dbReference type="Pfam" id="PF12838">
    <property type="entry name" value="Fer4_7"/>
    <property type="match status" value="1"/>
</dbReference>
<dbReference type="SUPFAM" id="SSF54862">
    <property type="entry name" value="4Fe-4S ferredoxins"/>
    <property type="match status" value="1"/>
</dbReference>
<dbReference type="PROSITE" id="PS00198">
    <property type="entry name" value="4FE4S_FER_1"/>
    <property type="match status" value="2"/>
</dbReference>
<dbReference type="PROSITE" id="PS51379">
    <property type="entry name" value="4FE4S_FER_2"/>
    <property type="match status" value="2"/>
</dbReference>
<keyword id="KW-0004">4Fe-4S</keyword>
<keyword id="KW-0997">Cell inner membrane</keyword>
<keyword id="KW-1003">Cell membrane</keyword>
<keyword id="KW-0408">Iron</keyword>
<keyword id="KW-0411">Iron-sulfur</keyword>
<keyword id="KW-0472">Membrane</keyword>
<keyword id="KW-0479">Metal-binding</keyword>
<keyword id="KW-0520">NAD</keyword>
<keyword id="KW-0874">Quinone</keyword>
<keyword id="KW-1185">Reference proteome</keyword>
<keyword id="KW-0677">Repeat</keyword>
<keyword id="KW-1278">Translocase</keyword>
<keyword id="KW-0830">Ubiquinone</keyword>
<gene>
    <name evidence="1" type="primary">nuoI1</name>
    <name type="ordered locus">Gmet_0163</name>
</gene>
<name>NUOI1_GEOMG</name>
<proteinExistence type="inferred from homology"/>
<comment type="function">
    <text evidence="1">NDH-1 shuttles electrons from NADH, via FMN and iron-sulfur (Fe-S) centers, to quinones in the respiratory chain. The immediate electron acceptor for the enzyme in this species is believed to be ubiquinone. Couples the redox reaction to proton translocation (for every two electrons transferred, four hydrogen ions are translocated across the cytoplasmic membrane), and thus conserves the redox energy in a proton gradient.</text>
</comment>
<comment type="catalytic activity">
    <reaction evidence="1">
        <text>a quinone + NADH + 5 H(+)(in) = a quinol + NAD(+) + 4 H(+)(out)</text>
        <dbReference type="Rhea" id="RHEA:57888"/>
        <dbReference type="ChEBI" id="CHEBI:15378"/>
        <dbReference type="ChEBI" id="CHEBI:24646"/>
        <dbReference type="ChEBI" id="CHEBI:57540"/>
        <dbReference type="ChEBI" id="CHEBI:57945"/>
        <dbReference type="ChEBI" id="CHEBI:132124"/>
    </reaction>
</comment>
<comment type="cofactor">
    <cofactor evidence="1">
        <name>[4Fe-4S] cluster</name>
        <dbReference type="ChEBI" id="CHEBI:49883"/>
    </cofactor>
    <text evidence="1">Binds 2 [4Fe-4S] clusters per subunit.</text>
</comment>
<comment type="subunit">
    <text evidence="1">NDH-1 is composed of 14 different subunits. Subunits NuoA, H, J, K, L, M, N constitute the membrane sector of the complex.</text>
</comment>
<comment type="subcellular location">
    <subcellularLocation>
        <location evidence="1">Cell inner membrane</location>
        <topology evidence="1">Peripheral membrane protein</topology>
    </subcellularLocation>
</comment>
<comment type="similarity">
    <text evidence="1">Belongs to the complex I 23 kDa subunit family.</text>
</comment>
<evidence type="ECO:0000255" key="1">
    <source>
        <dbReference type="HAMAP-Rule" id="MF_01351"/>
    </source>
</evidence>
<accession>Q39ZB4</accession>
<feature type="chain" id="PRO_0000245707" description="NADH-quinone oxidoreductase subunit I 1">
    <location>
        <begin position="1"/>
        <end position="176"/>
    </location>
</feature>
<feature type="domain" description="4Fe-4S ferredoxin-type 1" evidence="1">
    <location>
        <begin position="45"/>
        <end position="77"/>
    </location>
</feature>
<feature type="domain" description="4Fe-4S ferredoxin-type 2" evidence="1">
    <location>
        <begin position="87"/>
        <end position="116"/>
    </location>
</feature>
<feature type="binding site" evidence="1">
    <location>
        <position position="57"/>
    </location>
    <ligand>
        <name>[4Fe-4S] cluster</name>
        <dbReference type="ChEBI" id="CHEBI:49883"/>
        <label>1</label>
    </ligand>
</feature>
<feature type="binding site" evidence="1">
    <location>
        <position position="60"/>
    </location>
    <ligand>
        <name>[4Fe-4S] cluster</name>
        <dbReference type="ChEBI" id="CHEBI:49883"/>
        <label>1</label>
    </ligand>
</feature>
<feature type="binding site" evidence="1">
    <location>
        <position position="63"/>
    </location>
    <ligand>
        <name>[4Fe-4S] cluster</name>
        <dbReference type="ChEBI" id="CHEBI:49883"/>
        <label>1</label>
    </ligand>
</feature>
<feature type="binding site" evidence="1">
    <location>
        <position position="67"/>
    </location>
    <ligand>
        <name>[4Fe-4S] cluster</name>
        <dbReference type="ChEBI" id="CHEBI:49883"/>
        <label>2</label>
    </ligand>
</feature>
<feature type="binding site" evidence="1">
    <location>
        <position position="96"/>
    </location>
    <ligand>
        <name>[4Fe-4S] cluster</name>
        <dbReference type="ChEBI" id="CHEBI:49883"/>
        <label>2</label>
    </ligand>
</feature>
<feature type="binding site" evidence="1">
    <location>
        <position position="99"/>
    </location>
    <ligand>
        <name>[4Fe-4S] cluster</name>
        <dbReference type="ChEBI" id="CHEBI:49883"/>
        <label>2</label>
    </ligand>
</feature>
<feature type="binding site" evidence="1">
    <location>
        <position position="102"/>
    </location>
    <ligand>
        <name>[4Fe-4S] cluster</name>
        <dbReference type="ChEBI" id="CHEBI:49883"/>
        <label>2</label>
    </ligand>
</feature>
<feature type="binding site" evidence="1">
    <location>
        <position position="106"/>
    </location>
    <ligand>
        <name>[4Fe-4S] cluster</name>
        <dbReference type="ChEBI" id="CHEBI:49883"/>
        <label>1</label>
    </ligand>
</feature>
<protein>
    <recommendedName>
        <fullName evidence="1">NADH-quinone oxidoreductase subunit I 1</fullName>
        <ecNumber evidence="1">7.1.1.-</ecNumber>
    </recommendedName>
    <alternativeName>
        <fullName evidence="1">NADH dehydrogenase I subunit I 1</fullName>
    </alternativeName>
    <alternativeName>
        <fullName evidence="1">NDH-1 subunit I 1</fullName>
    </alternativeName>
</protein>